<organism>
    <name type="scientific">Leishmania infantum</name>
    <dbReference type="NCBI Taxonomy" id="5671"/>
    <lineage>
        <taxon>Eukaryota</taxon>
        <taxon>Discoba</taxon>
        <taxon>Euglenozoa</taxon>
        <taxon>Kinetoplastea</taxon>
        <taxon>Metakinetoplastina</taxon>
        <taxon>Trypanosomatida</taxon>
        <taxon>Trypanosomatidae</taxon>
        <taxon>Leishmaniinae</taxon>
        <taxon>Leishmania</taxon>
    </lineage>
</organism>
<feature type="transit peptide" description="Mitochondrion" evidence="2">
    <location>
        <begin position="1"/>
        <end status="unknown"/>
    </location>
</feature>
<feature type="chain" id="PRO_0000291605" description="Probable citrate synthase, mitochondrial">
    <location>
        <begin status="unknown"/>
        <end position="470"/>
    </location>
</feature>
<feature type="active site" evidence="3">
    <location>
        <position position="297"/>
    </location>
</feature>
<feature type="active site" evidence="3">
    <location>
        <position position="351"/>
    </location>
</feature>
<feature type="active site" evidence="3">
    <location>
        <position position="406"/>
    </location>
</feature>
<sequence length="470" mass="52192">MRALRCSIIRGVAGLRMASSVLDEMKEQMLRRSKEDHKKIGDLRKKHGHEKLCDATIDAVYGGMRGITGLVYEPSLLDSAEGIRFRGLTILECQEMLPKAPGGKEPLPEAMFWLLMTGEVPTEEQARGLNAELHRRVDPEAIAAAQKAIAALPKNAHPMTAFSVGVLALQTYSKFAAAYAAGKSNKKTYWEYALEDSLDMLARTPAVAAMIYNRETKGQVELAAPSNSDLDWAANFAKMLGFQDEEFRECMRLYLSVHADHEGGNVSAHTTTLVASALSDPYLAFSAGLNGLAGPLHGLANQEVLKYLFSMQERVKADGVNVHDEAALEKALTKYTWELLNSGQVVPGYGHAVLRKVDPRYTCQRNFCLRHNFQDDLFKLVNTIYMIMPGILKEHGKTKNPYPNVDAHSGVLLQHYGLTEQNYYTVLFGLSRQMGVLAGVVWDRLQGRPLERPKSITTEMLAKKYLCNSL</sequence>
<evidence type="ECO:0000250" key="1"/>
<evidence type="ECO:0000255" key="2"/>
<evidence type="ECO:0000255" key="3">
    <source>
        <dbReference type="PROSITE-ProRule" id="PRU10117"/>
    </source>
</evidence>
<evidence type="ECO:0000305" key="4"/>
<name>CISY_LEIIN</name>
<accession>A4HXU4</accession>
<keyword id="KW-0496">Mitochondrion</keyword>
<keyword id="KW-1185">Reference proteome</keyword>
<keyword id="KW-0808">Transferase</keyword>
<keyword id="KW-0809">Transit peptide</keyword>
<keyword id="KW-0816">Tricarboxylic acid cycle</keyword>
<proteinExistence type="inferred from homology"/>
<dbReference type="EC" id="2.3.3.16"/>
<dbReference type="EMBL" id="FR796450">
    <property type="protein sequence ID" value="CAM67122.1"/>
    <property type="molecule type" value="Genomic_DNA"/>
</dbReference>
<dbReference type="RefSeq" id="XP_001464885.1">
    <property type="nucleotide sequence ID" value="XM_001464848.1"/>
</dbReference>
<dbReference type="SMR" id="A4HXU4"/>
<dbReference type="FunCoup" id="A4HXU4">
    <property type="interactions" value="288"/>
</dbReference>
<dbReference type="STRING" id="5671.A4HXU4"/>
<dbReference type="GeneID" id="5068291"/>
<dbReference type="KEGG" id="lif:LINJ_18_0690"/>
<dbReference type="VEuPathDB" id="TriTrypDB:LINF_180012100"/>
<dbReference type="eggNOG" id="KOG2617">
    <property type="taxonomic scope" value="Eukaryota"/>
</dbReference>
<dbReference type="InParanoid" id="A4HXU4"/>
<dbReference type="OMA" id="VLEWLFK"/>
<dbReference type="UniPathway" id="UPA00223">
    <property type="reaction ID" value="UER00717"/>
</dbReference>
<dbReference type="Proteomes" id="UP000008153">
    <property type="component" value="Chromosome 18"/>
</dbReference>
<dbReference type="GO" id="GO:0005759">
    <property type="term" value="C:mitochondrial matrix"/>
    <property type="evidence" value="ECO:0007669"/>
    <property type="project" value="UniProtKB-SubCell"/>
</dbReference>
<dbReference type="GO" id="GO:0004108">
    <property type="term" value="F:citrate (Si)-synthase activity"/>
    <property type="evidence" value="ECO:0007669"/>
    <property type="project" value="TreeGrafter"/>
</dbReference>
<dbReference type="GO" id="GO:0005975">
    <property type="term" value="P:carbohydrate metabolic process"/>
    <property type="evidence" value="ECO:0007669"/>
    <property type="project" value="TreeGrafter"/>
</dbReference>
<dbReference type="GO" id="GO:0006099">
    <property type="term" value="P:tricarboxylic acid cycle"/>
    <property type="evidence" value="ECO:0007669"/>
    <property type="project" value="UniProtKB-UniPathway"/>
</dbReference>
<dbReference type="CDD" id="cd06103">
    <property type="entry name" value="ScCS-like"/>
    <property type="match status" value="1"/>
</dbReference>
<dbReference type="FunFam" id="1.10.230.10:FF:000001">
    <property type="entry name" value="Citrate synthase"/>
    <property type="match status" value="1"/>
</dbReference>
<dbReference type="Gene3D" id="1.10.580.10">
    <property type="entry name" value="Citrate Synthase, domain 1"/>
    <property type="match status" value="1"/>
</dbReference>
<dbReference type="Gene3D" id="1.10.230.10">
    <property type="entry name" value="Cytochrome P450-Terp, domain 2"/>
    <property type="match status" value="1"/>
</dbReference>
<dbReference type="InterPro" id="IPR016142">
    <property type="entry name" value="Citrate_synth-like_lrg_a-sub"/>
</dbReference>
<dbReference type="InterPro" id="IPR016143">
    <property type="entry name" value="Citrate_synth-like_sm_a-sub"/>
</dbReference>
<dbReference type="InterPro" id="IPR002020">
    <property type="entry name" value="Citrate_synthase"/>
</dbReference>
<dbReference type="InterPro" id="IPR019810">
    <property type="entry name" value="Citrate_synthase_AS"/>
</dbReference>
<dbReference type="InterPro" id="IPR036969">
    <property type="entry name" value="Citrate_synthase_sf"/>
</dbReference>
<dbReference type="NCBIfam" id="NF007128">
    <property type="entry name" value="PRK09569.1"/>
    <property type="match status" value="1"/>
</dbReference>
<dbReference type="PANTHER" id="PTHR11739">
    <property type="entry name" value="CITRATE SYNTHASE"/>
    <property type="match status" value="1"/>
</dbReference>
<dbReference type="PANTHER" id="PTHR11739:SF8">
    <property type="entry name" value="CITRATE SYNTHASE, MITOCHONDRIAL"/>
    <property type="match status" value="1"/>
</dbReference>
<dbReference type="Pfam" id="PF00285">
    <property type="entry name" value="Citrate_synt"/>
    <property type="match status" value="1"/>
</dbReference>
<dbReference type="PRINTS" id="PR00143">
    <property type="entry name" value="CITRTSNTHASE"/>
</dbReference>
<dbReference type="SUPFAM" id="SSF48256">
    <property type="entry name" value="Citrate synthase"/>
    <property type="match status" value="1"/>
</dbReference>
<dbReference type="PROSITE" id="PS00480">
    <property type="entry name" value="CITRATE_SYNTHASE"/>
    <property type="match status" value="1"/>
</dbReference>
<protein>
    <recommendedName>
        <fullName>Probable citrate synthase, mitochondrial</fullName>
        <ecNumber>2.3.3.16</ecNumber>
    </recommendedName>
</protein>
<gene>
    <name type="ORF">LinJ18.0690</name>
    <name type="ORF">LinJ_18_0690</name>
</gene>
<comment type="catalytic activity">
    <reaction evidence="3">
        <text>oxaloacetate + acetyl-CoA + H2O = citrate + CoA + H(+)</text>
        <dbReference type="Rhea" id="RHEA:16845"/>
        <dbReference type="ChEBI" id="CHEBI:15377"/>
        <dbReference type="ChEBI" id="CHEBI:15378"/>
        <dbReference type="ChEBI" id="CHEBI:16452"/>
        <dbReference type="ChEBI" id="CHEBI:16947"/>
        <dbReference type="ChEBI" id="CHEBI:57287"/>
        <dbReference type="ChEBI" id="CHEBI:57288"/>
        <dbReference type="EC" id="2.3.3.16"/>
    </reaction>
</comment>
<comment type="pathway">
    <text>Carbohydrate metabolism; tricarboxylic acid cycle; isocitrate from oxaloacetate: step 1/2.</text>
</comment>
<comment type="subunit">
    <text evidence="1">Homodimer.</text>
</comment>
<comment type="subcellular location">
    <subcellularLocation>
        <location evidence="1">Mitochondrion matrix</location>
    </subcellularLocation>
</comment>
<comment type="miscellaneous">
    <text>Citrate synthase is found in nearly all cells capable of oxidative metabolism.</text>
</comment>
<comment type="similarity">
    <text evidence="4">Belongs to the citrate synthase family.</text>
</comment>
<reference key="1">
    <citation type="journal article" date="2007" name="Nat. Genet.">
        <title>Comparative genomic analysis of three Leishmania species that cause diverse human disease.</title>
        <authorList>
            <person name="Peacock C.S."/>
            <person name="Seeger K."/>
            <person name="Harris D."/>
            <person name="Murphy L."/>
            <person name="Ruiz J.C."/>
            <person name="Quail M.A."/>
            <person name="Peters N."/>
            <person name="Adlem E."/>
            <person name="Tivey A."/>
            <person name="Aslett M."/>
            <person name="Kerhornou A."/>
            <person name="Ivens A."/>
            <person name="Fraser A."/>
            <person name="Rajandream M.-A."/>
            <person name="Carver T."/>
            <person name="Norbertczak H."/>
            <person name="Chillingworth T."/>
            <person name="Hance Z."/>
            <person name="Jagels K."/>
            <person name="Moule S."/>
            <person name="Ormond D."/>
            <person name="Rutter S."/>
            <person name="Sqaures R."/>
            <person name="Whitehead S."/>
            <person name="Rabbinowitsch E."/>
            <person name="Arrowsmith C."/>
            <person name="White B."/>
            <person name="Thurston S."/>
            <person name="Bringaud F."/>
            <person name="Baldauf S.L."/>
            <person name="Faulconbridge A."/>
            <person name="Jeffares D."/>
            <person name="Depledge D.P."/>
            <person name="Oyola S.O."/>
            <person name="Hilley J.D."/>
            <person name="Brito L.O."/>
            <person name="Tosi L.R.O."/>
            <person name="Barrell B."/>
            <person name="Cruz A.K."/>
            <person name="Mottram J.C."/>
            <person name="Smith D.F."/>
            <person name="Berriman M."/>
        </authorList>
    </citation>
    <scope>NUCLEOTIDE SEQUENCE [LARGE SCALE GENOMIC DNA]</scope>
    <source>
        <strain>JPCM5</strain>
    </source>
</reference>